<gene>
    <name type="primary">PLA2-III</name>
    <name type="ordered locus">Os03g0708000</name>
    <name type="ordered locus">LOC_Os03g50030</name>
    <name type="ORF">OsJ_12288</name>
    <name type="ORF">OSJNBb0022E02.7</name>
</gene>
<organism>
    <name type="scientific">Oryza sativa subsp. japonica</name>
    <name type="common">Rice</name>
    <dbReference type="NCBI Taxonomy" id="39947"/>
    <lineage>
        <taxon>Eukaryota</taxon>
        <taxon>Viridiplantae</taxon>
        <taxon>Streptophyta</taxon>
        <taxon>Embryophyta</taxon>
        <taxon>Tracheophyta</taxon>
        <taxon>Spermatophyta</taxon>
        <taxon>Magnoliopsida</taxon>
        <taxon>Liliopsida</taxon>
        <taxon>Poales</taxon>
        <taxon>Poaceae</taxon>
        <taxon>BOP clade</taxon>
        <taxon>Oryzoideae</taxon>
        <taxon>Oryzeae</taxon>
        <taxon>Oryzinae</taxon>
        <taxon>Oryza</taxon>
        <taxon>Oryza sativa</taxon>
    </lineage>
</organism>
<accession>Q10E50</accession>
<accession>A0A0P0W1Z7</accession>
<accession>Q94GR5</accession>
<proteinExistence type="evidence at protein level"/>
<feature type="signal peptide" evidence="3">
    <location>
        <begin position="1"/>
        <end position="43"/>
    </location>
</feature>
<feature type="chain" id="PRO_0000387496" description="Phospholipase A2 homolog 3">
    <location>
        <begin position="44"/>
        <end position="163"/>
    </location>
</feature>
<feature type="active site" evidence="2">
    <location>
        <position position="99"/>
    </location>
</feature>
<feature type="binding site" evidence="1">
    <location>
        <position position="75"/>
    </location>
    <ligand>
        <name>Ca(2+)</name>
        <dbReference type="ChEBI" id="CHEBI:29108"/>
    </ligand>
</feature>
<feature type="binding site" evidence="1">
    <location>
        <position position="77"/>
    </location>
    <ligand>
        <name>Ca(2+)</name>
        <dbReference type="ChEBI" id="CHEBI:29108"/>
    </ligand>
</feature>
<feature type="binding site" evidence="1">
    <location>
        <position position="80"/>
    </location>
    <ligand>
        <name>Ca(2+)</name>
        <dbReference type="ChEBI" id="CHEBI:29108"/>
    </ligand>
</feature>
<feature type="binding site" evidence="1">
    <location>
        <position position="100"/>
    </location>
    <ligand>
        <name>Ca(2+)</name>
        <dbReference type="ChEBI" id="CHEBI:29108"/>
    </ligand>
</feature>
<feature type="disulfide bond" evidence="1">
    <location>
        <begin position="55"/>
        <end position="83"/>
    </location>
</feature>
<feature type="disulfide bond" evidence="1">
    <location>
        <begin position="59"/>
        <end position="89"/>
    </location>
</feature>
<feature type="disulfide bond" evidence="1">
    <location>
        <begin position="64"/>
        <end position="137"/>
    </location>
</feature>
<feature type="disulfide bond" evidence="1">
    <location>
        <begin position="76"/>
        <end position="96"/>
    </location>
</feature>
<feature type="disulfide bond" evidence="1">
    <location>
        <begin position="95"/>
        <end position="121"/>
    </location>
</feature>
<feature type="disulfide bond" evidence="1">
    <location>
        <begin position="102"/>
        <end position="114"/>
    </location>
</feature>
<sequence length="163" mass="17114">MARGGSFSRLRLRAGVVVAAAAAALLLFAVVAPPAAALNIGLQSAGDGASKAGLCSRTCESDHCTTPPLLRYGKYCGILYSGCPGEQPCDELDACCMHHDNCVQAKNDYLSTACNEELLECLARLREGSSTFQGNKCMIDEVIDVISLVIEAAVVAGRLLHKP</sequence>
<name>PLA23_ORYSJ</name>
<protein>
    <recommendedName>
        <fullName>Phospholipase A2 homolog 3</fullName>
        <ecNumber>3.1.1.4</ecNumber>
    </recommendedName>
</protein>
<evidence type="ECO:0000250" key="1"/>
<evidence type="ECO:0000255" key="2">
    <source>
        <dbReference type="PROSITE-ProRule" id="PRU10035"/>
    </source>
</evidence>
<evidence type="ECO:0000269" key="3">
    <source>
    </source>
</evidence>
<evidence type="ECO:0000305" key="4"/>
<dbReference type="EC" id="3.1.1.4"/>
<dbReference type="EMBL" id="AC087797">
    <property type="protein sequence ID" value="AAK50122.1"/>
    <property type="molecule type" value="Genomic_DNA"/>
</dbReference>
<dbReference type="EMBL" id="DP000009">
    <property type="protein sequence ID" value="ABF98479.1"/>
    <property type="molecule type" value="Genomic_DNA"/>
</dbReference>
<dbReference type="EMBL" id="AP008209">
    <property type="protein sequence ID" value="BAF12948.1"/>
    <property type="molecule type" value="Genomic_DNA"/>
</dbReference>
<dbReference type="EMBL" id="AP014959">
    <property type="protein sequence ID" value="BAS85989.1"/>
    <property type="molecule type" value="Genomic_DNA"/>
</dbReference>
<dbReference type="EMBL" id="CM000140">
    <property type="protein sequence ID" value="EAZ28314.1"/>
    <property type="molecule type" value="Genomic_DNA"/>
</dbReference>
<dbReference type="EMBL" id="AK105828">
    <property type="protein sequence ID" value="BAG97387.1"/>
    <property type="molecule type" value="mRNA"/>
</dbReference>
<dbReference type="RefSeq" id="XP_015628413.1">
    <property type="nucleotide sequence ID" value="XM_015772927.1"/>
</dbReference>
<dbReference type="SMR" id="Q10E50"/>
<dbReference type="FunCoup" id="Q10E50">
    <property type="interactions" value="633"/>
</dbReference>
<dbReference type="STRING" id="39947.Q10E50"/>
<dbReference type="PaxDb" id="39947-Q10E50"/>
<dbReference type="EnsemblPlants" id="Os03t0708000-01">
    <property type="protein sequence ID" value="Os03t0708000-01"/>
    <property type="gene ID" value="Os03g0708000"/>
</dbReference>
<dbReference type="Gramene" id="Os03t0708000-01">
    <property type="protein sequence ID" value="Os03t0708000-01"/>
    <property type="gene ID" value="Os03g0708000"/>
</dbReference>
<dbReference type="KEGG" id="dosa:Os03g0708000"/>
<dbReference type="eggNOG" id="ENOG502RYYJ">
    <property type="taxonomic scope" value="Eukaryota"/>
</dbReference>
<dbReference type="HOGENOM" id="CLU_115623_0_0_1"/>
<dbReference type="InParanoid" id="Q10E50"/>
<dbReference type="OMA" id="CQVDEVI"/>
<dbReference type="OrthoDB" id="1932081at2759"/>
<dbReference type="PlantReactome" id="R-OSA-1119332">
    <property type="pathway name" value="Jasmonic acid biosynthesis"/>
</dbReference>
<dbReference type="Proteomes" id="UP000000763">
    <property type="component" value="Chromosome 3"/>
</dbReference>
<dbReference type="Proteomes" id="UP000007752">
    <property type="component" value="Chromosome 3"/>
</dbReference>
<dbReference type="Proteomes" id="UP000059680">
    <property type="component" value="Chromosome 3"/>
</dbReference>
<dbReference type="GO" id="GO:0005576">
    <property type="term" value="C:extracellular region"/>
    <property type="evidence" value="ECO:0007669"/>
    <property type="project" value="UniProtKB-SubCell"/>
</dbReference>
<dbReference type="GO" id="GO:0005509">
    <property type="term" value="F:calcium ion binding"/>
    <property type="evidence" value="ECO:0000318"/>
    <property type="project" value="GO_Central"/>
</dbReference>
<dbReference type="GO" id="GO:0008289">
    <property type="term" value="F:lipid binding"/>
    <property type="evidence" value="ECO:0000318"/>
    <property type="project" value="GO_Central"/>
</dbReference>
<dbReference type="GO" id="GO:0004623">
    <property type="term" value="F:phospholipase A2 activity"/>
    <property type="evidence" value="ECO:0000314"/>
    <property type="project" value="UniProtKB"/>
</dbReference>
<dbReference type="GO" id="GO:0050482">
    <property type="term" value="P:arachidonate secretion"/>
    <property type="evidence" value="ECO:0007669"/>
    <property type="project" value="InterPro"/>
</dbReference>
<dbReference type="GO" id="GO:0016042">
    <property type="term" value="P:lipid catabolic process"/>
    <property type="evidence" value="ECO:0007669"/>
    <property type="project" value="UniProtKB-KW"/>
</dbReference>
<dbReference type="GO" id="GO:0006644">
    <property type="term" value="P:phospholipid metabolic process"/>
    <property type="evidence" value="ECO:0007669"/>
    <property type="project" value="InterPro"/>
</dbReference>
<dbReference type="CDD" id="cd04706">
    <property type="entry name" value="PLA2_plant"/>
    <property type="match status" value="1"/>
</dbReference>
<dbReference type="FunFam" id="1.20.90.10:FF:000005">
    <property type="entry name" value="Secretory phospholipase A2"/>
    <property type="match status" value="1"/>
</dbReference>
<dbReference type="Gene3D" id="1.20.90.10">
    <property type="entry name" value="Phospholipase A2 domain"/>
    <property type="match status" value="1"/>
</dbReference>
<dbReference type="InterPro" id="IPR036444">
    <property type="entry name" value="PLipase_A2_dom_sf"/>
</dbReference>
<dbReference type="InterPro" id="IPR033113">
    <property type="entry name" value="PLipase_A2_His_AS"/>
</dbReference>
<dbReference type="SUPFAM" id="SSF48619">
    <property type="entry name" value="Phospholipase A2, PLA2"/>
    <property type="match status" value="1"/>
</dbReference>
<dbReference type="PROSITE" id="PS00118">
    <property type="entry name" value="PA2_HIS"/>
    <property type="match status" value="1"/>
</dbReference>
<comment type="function">
    <text evidence="3">PA2 catalyzes the calcium-dependent hydrolysis of the 2-acyl groups in 3-sn-phosphoglycerides. Releases lysophospholipids (LPLs) and free fatty acids (FFAs) from membrane phospholipids in response to hormones and other external stimuli.</text>
</comment>
<comment type="catalytic activity">
    <reaction evidence="2">
        <text>a 1,2-diacyl-sn-glycero-3-phosphocholine + H2O = a 1-acyl-sn-glycero-3-phosphocholine + a fatty acid + H(+)</text>
        <dbReference type="Rhea" id="RHEA:15801"/>
        <dbReference type="ChEBI" id="CHEBI:15377"/>
        <dbReference type="ChEBI" id="CHEBI:15378"/>
        <dbReference type="ChEBI" id="CHEBI:28868"/>
        <dbReference type="ChEBI" id="CHEBI:57643"/>
        <dbReference type="ChEBI" id="CHEBI:58168"/>
        <dbReference type="EC" id="3.1.1.4"/>
    </reaction>
</comment>
<comment type="cofactor">
    <cofactor evidence="4">
        <name>Ca(2+)</name>
        <dbReference type="ChEBI" id="CHEBI:29108"/>
    </cofactor>
    <text evidence="4">Binds 1 Ca(2+) ion per subunit.</text>
</comment>
<comment type="activity regulation">
    <text evidence="3">Inhibited by EGTA.</text>
</comment>
<comment type="subcellular location">
    <subcellularLocation>
        <location evidence="4">Secreted</location>
    </subcellularLocation>
</comment>
<comment type="similarity">
    <text evidence="4">Belongs to the phospholipase A2 family.</text>
</comment>
<keyword id="KW-0106">Calcium</keyword>
<keyword id="KW-0903">Direct protein sequencing</keyword>
<keyword id="KW-1015">Disulfide bond</keyword>
<keyword id="KW-0378">Hydrolase</keyword>
<keyword id="KW-0442">Lipid degradation</keyword>
<keyword id="KW-0443">Lipid metabolism</keyword>
<keyword id="KW-0479">Metal-binding</keyword>
<keyword id="KW-1185">Reference proteome</keyword>
<keyword id="KW-0964">Secreted</keyword>
<keyword id="KW-0732">Signal</keyword>
<reference key="1">
    <citation type="journal article" date="2005" name="Genome Res.">
        <title>Sequence, annotation, and analysis of synteny between rice chromosome 3 and diverged grass species.</title>
        <authorList>
            <consortium name="The rice chromosome 3 sequencing consortium"/>
            <person name="Buell C.R."/>
            <person name="Yuan Q."/>
            <person name="Ouyang S."/>
            <person name="Liu J."/>
            <person name="Zhu W."/>
            <person name="Wang A."/>
            <person name="Maiti R."/>
            <person name="Haas B."/>
            <person name="Wortman J."/>
            <person name="Pertea M."/>
            <person name="Jones K.M."/>
            <person name="Kim M."/>
            <person name="Overton L."/>
            <person name="Tsitrin T."/>
            <person name="Fadrosh D."/>
            <person name="Bera J."/>
            <person name="Weaver B."/>
            <person name="Jin S."/>
            <person name="Johri S."/>
            <person name="Reardon M."/>
            <person name="Webb K."/>
            <person name="Hill J."/>
            <person name="Moffat K."/>
            <person name="Tallon L."/>
            <person name="Van Aken S."/>
            <person name="Lewis M."/>
            <person name="Utterback T."/>
            <person name="Feldblyum T."/>
            <person name="Zismann V."/>
            <person name="Iobst S."/>
            <person name="Hsiao J."/>
            <person name="de Vazeille A.R."/>
            <person name="Salzberg S.L."/>
            <person name="White O."/>
            <person name="Fraser C.M."/>
            <person name="Yu Y."/>
            <person name="Kim H."/>
            <person name="Rambo T."/>
            <person name="Currie J."/>
            <person name="Collura K."/>
            <person name="Kernodle-Thompson S."/>
            <person name="Wei F."/>
            <person name="Kudrna K."/>
            <person name="Ammiraju J.S.S."/>
            <person name="Luo M."/>
            <person name="Goicoechea J.L."/>
            <person name="Wing R.A."/>
            <person name="Henry D."/>
            <person name="Oates R."/>
            <person name="Palmer M."/>
            <person name="Pries G."/>
            <person name="Saski C."/>
            <person name="Simmons J."/>
            <person name="Soderlund C."/>
            <person name="Nelson W."/>
            <person name="de la Bastide M."/>
            <person name="Spiegel L."/>
            <person name="Nascimento L."/>
            <person name="Huang E."/>
            <person name="Preston R."/>
            <person name="Zutavern T."/>
            <person name="Palmer L."/>
            <person name="O'Shaughnessy A."/>
            <person name="Dike S."/>
            <person name="McCombie W.R."/>
            <person name="Minx P."/>
            <person name="Cordum H."/>
            <person name="Wilson R."/>
            <person name="Jin W."/>
            <person name="Lee H.R."/>
            <person name="Jiang J."/>
            <person name="Jackson S."/>
        </authorList>
    </citation>
    <scope>NUCLEOTIDE SEQUENCE [LARGE SCALE GENOMIC DNA]</scope>
    <source>
        <strain>cv. Nipponbare</strain>
    </source>
</reference>
<reference key="2">
    <citation type="journal article" date="2005" name="Nature">
        <title>The map-based sequence of the rice genome.</title>
        <authorList>
            <consortium name="International rice genome sequencing project (IRGSP)"/>
        </authorList>
    </citation>
    <scope>NUCLEOTIDE SEQUENCE [LARGE SCALE GENOMIC DNA]</scope>
    <source>
        <strain>cv. Nipponbare</strain>
    </source>
</reference>
<reference key="3">
    <citation type="journal article" date="2008" name="Nucleic Acids Res.">
        <title>The rice annotation project database (RAP-DB): 2008 update.</title>
        <authorList>
            <consortium name="The rice annotation project (RAP)"/>
        </authorList>
    </citation>
    <scope>GENOME REANNOTATION</scope>
    <source>
        <strain>cv. Nipponbare</strain>
    </source>
</reference>
<reference key="4">
    <citation type="journal article" date="2013" name="Rice">
        <title>Improvement of the Oryza sativa Nipponbare reference genome using next generation sequence and optical map data.</title>
        <authorList>
            <person name="Kawahara Y."/>
            <person name="de la Bastide M."/>
            <person name="Hamilton J.P."/>
            <person name="Kanamori H."/>
            <person name="McCombie W.R."/>
            <person name="Ouyang S."/>
            <person name="Schwartz D.C."/>
            <person name="Tanaka T."/>
            <person name="Wu J."/>
            <person name="Zhou S."/>
            <person name="Childs K.L."/>
            <person name="Davidson R.M."/>
            <person name="Lin H."/>
            <person name="Quesada-Ocampo L."/>
            <person name="Vaillancourt B."/>
            <person name="Sakai H."/>
            <person name="Lee S.S."/>
            <person name="Kim J."/>
            <person name="Numa H."/>
            <person name="Itoh T."/>
            <person name="Buell C.R."/>
            <person name="Matsumoto T."/>
        </authorList>
    </citation>
    <scope>GENOME REANNOTATION</scope>
    <source>
        <strain>cv. Nipponbare</strain>
    </source>
</reference>
<reference key="5">
    <citation type="journal article" date="2005" name="PLoS Biol.">
        <title>The genomes of Oryza sativa: a history of duplications.</title>
        <authorList>
            <person name="Yu J."/>
            <person name="Wang J."/>
            <person name="Lin W."/>
            <person name="Li S."/>
            <person name="Li H."/>
            <person name="Zhou J."/>
            <person name="Ni P."/>
            <person name="Dong W."/>
            <person name="Hu S."/>
            <person name="Zeng C."/>
            <person name="Zhang J."/>
            <person name="Zhang Y."/>
            <person name="Li R."/>
            <person name="Xu Z."/>
            <person name="Li S."/>
            <person name="Li X."/>
            <person name="Zheng H."/>
            <person name="Cong L."/>
            <person name="Lin L."/>
            <person name="Yin J."/>
            <person name="Geng J."/>
            <person name="Li G."/>
            <person name="Shi J."/>
            <person name="Liu J."/>
            <person name="Lv H."/>
            <person name="Li J."/>
            <person name="Wang J."/>
            <person name="Deng Y."/>
            <person name="Ran L."/>
            <person name="Shi X."/>
            <person name="Wang X."/>
            <person name="Wu Q."/>
            <person name="Li C."/>
            <person name="Ren X."/>
            <person name="Wang J."/>
            <person name="Wang X."/>
            <person name="Li D."/>
            <person name="Liu D."/>
            <person name="Zhang X."/>
            <person name="Ji Z."/>
            <person name="Zhao W."/>
            <person name="Sun Y."/>
            <person name="Zhang Z."/>
            <person name="Bao J."/>
            <person name="Han Y."/>
            <person name="Dong L."/>
            <person name="Ji J."/>
            <person name="Chen P."/>
            <person name="Wu S."/>
            <person name="Liu J."/>
            <person name="Xiao Y."/>
            <person name="Bu D."/>
            <person name="Tan J."/>
            <person name="Yang L."/>
            <person name="Ye C."/>
            <person name="Zhang J."/>
            <person name="Xu J."/>
            <person name="Zhou Y."/>
            <person name="Yu Y."/>
            <person name="Zhang B."/>
            <person name="Zhuang S."/>
            <person name="Wei H."/>
            <person name="Liu B."/>
            <person name="Lei M."/>
            <person name="Yu H."/>
            <person name="Li Y."/>
            <person name="Xu H."/>
            <person name="Wei S."/>
            <person name="He X."/>
            <person name="Fang L."/>
            <person name="Zhang Z."/>
            <person name="Zhang Y."/>
            <person name="Huang X."/>
            <person name="Su Z."/>
            <person name="Tong W."/>
            <person name="Li J."/>
            <person name="Tong Z."/>
            <person name="Li S."/>
            <person name="Ye J."/>
            <person name="Wang L."/>
            <person name="Fang L."/>
            <person name="Lei T."/>
            <person name="Chen C.-S."/>
            <person name="Chen H.-C."/>
            <person name="Xu Z."/>
            <person name="Li H."/>
            <person name="Huang H."/>
            <person name="Zhang F."/>
            <person name="Xu H."/>
            <person name="Li N."/>
            <person name="Zhao C."/>
            <person name="Li S."/>
            <person name="Dong L."/>
            <person name="Huang Y."/>
            <person name="Li L."/>
            <person name="Xi Y."/>
            <person name="Qi Q."/>
            <person name="Li W."/>
            <person name="Zhang B."/>
            <person name="Hu W."/>
            <person name="Zhang Y."/>
            <person name="Tian X."/>
            <person name="Jiao Y."/>
            <person name="Liang X."/>
            <person name="Jin J."/>
            <person name="Gao L."/>
            <person name="Zheng W."/>
            <person name="Hao B."/>
            <person name="Liu S.-M."/>
            <person name="Wang W."/>
            <person name="Yuan L."/>
            <person name="Cao M."/>
            <person name="McDermott J."/>
            <person name="Samudrala R."/>
            <person name="Wang J."/>
            <person name="Wong G.K.-S."/>
            <person name="Yang H."/>
        </authorList>
    </citation>
    <scope>NUCLEOTIDE SEQUENCE [LARGE SCALE GENOMIC DNA]</scope>
    <source>
        <strain>cv. Nipponbare</strain>
    </source>
</reference>
<reference key="6">
    <citation type="journal article" date="2003" name="Science">
        <title>Collection, mapping, and annotation of over 28,000 cDNA clones from japonica rice.</title>
        <authorList>
            <consortium name="The rice full-length cDNA consortium"/>
        </authorList>
    </citation>
    <scope>NUCLEOTIDE SEQUENCE [LARGE SCALE MRNA]</scope>
    <source>
        <strain>cv. Nipponbare</strain>
    </source>
</reference>
<reference key="7">
    <citation type="journal article" date="1999" name="Plant Mol. Biol.">
        <title>Plant low-molecular-weight phospholipase A2S (PLA2s) are structurally related to the animal secretory PLA2s and are present as a family of isoforms in rice (Oryza sativa).</title>
        <authorList>
            <person name="Staahl U."/>
            <person name="Lee M."/>
            <person name="Sjoedahl S."/>
            <person name="Archer D."/>
            <person name="Cellini F."/>
            <person name="Ek B."/>
            <person name="Iannacone R."/>
            <person name="MacKenzie D."/>
            <person name="Semeraro L."/>
            <person name="Tramontano E."/>
            <person name="Stymme S."/>
        </authorList>
    </citation>
    <scope>PROTEIN SEQUENCE OF 44-59</scope>
    <scope>FUNCTION</scope>
    <scope>ACTIVITY REGULATION</scope>
    <source>
        <strain>cv. Nipponbare</strain>
        <tissue>Shoot</tissue>
    </source>
</reference>